<comment type="function">
    <text evidence="1">This protein is involved in the repair of mismatches in DNA. It is possible that it carries out the mismatch recognition step. This protein has a weak ATPase activity.</text>
</comment>
<comment type="similarity">
    <text evidence="1">Belongs to the DNA mismatch repair MutS family.</text>
</comment>
<gene>
    <name evidence="1" type="primary">mutS</name>
    <name type="ordered locus">BLi01928</name>
    <name type="ordered locus">BL03663</name>
</gene>
<name>MUTS_BACLD</name>
<protein>
    <recommendedName>
        <fullName evidence="1">DNA mismatch repair protein MutS</fullName>
    </recommendedName>
</protein>
<evidence type="ECO:0000255" key="1">
    <source>
        <dbReference type="HAMAP-Rule" id="MF_00096"/>
    </source>
</evidence>
<keyword id="KW-0067">ATP-binding</keyword>
<keyword id="KW-0227">DNA damage</keyword>
<keyword id="KW-0234">DNA repair</keyword>
<keyword id="KW-0238">DNA-binding</keyword>
<keyword id="KW-0547">Nucleotide-binding</keyword>
<keyword id="KW-1185">Reference proteome</keyword>
<sequence>MAGYTPMIQQYLKIKAEYQDAFLFFRLGDFYEMFFEDAKKASQELEITLTSRDGGSSERIPMCGVPYHSCSSYIEQLIKKGYKVAICEQVEDPKSAKGVVKREVVQLITPGTVMDGKGIHENENNFIASVSKFQHTYGLAFSDLTTGENLVTAIERLDDVVSEIYSVGAREIVVSRNLDEKDVAMLKERCGATISFEDEQADEVPGIVNGLGSKELVDTFMRLYVYLKRTQKRSLDHLQNVQAYELEEAMKIDLYSKRNLELTETIRSKNKKGSLLWLLDETKTAMGGRLLKQWIDRPLIRKGQIEERQEIVETLIAHLFEREDLRERLKEVYDLERLAGRVAYGNVNARDLIQLKESLKQVPAIKQLVGSLDHPKAKARAEKIDPCGDLLNLLEDALYENPPLSLKEGNLIKDGYHAKLDEYRDASKNGKDWIARLEQQEREYTGIRSLKVGFNKVFGYYIEVTKANIHLLEEGRYERKQTLTNAERYITPELKEKEALILEAENNICELEYELFSELRSKVKEYIPRLQQLAKMMSELDVLQCFATISENRHYVKPEFSDDVVQVIDGRHPVVEKVMDSQSYVPNSCEMGKGRQMLLITGPNMSGKSTYMRQMALISILAQIGCFVPAKKAVLPIFDQIFTRIGAADDLISGQSTFMVEMLEAKNAIVHATKNSLILFDEIGRGTSTYDGMALAQAIIEYVHEHIGAKTLFSTHYHELTSLEEKLDDLKNVHVRAEEYEGKVVFLHQIKEGAADKSYGIHVAQLAELPDGLISRAKTILKELESGAKEAAPSTAPNMVKEAAEEAAATVADQPAQLSFFETDKPIEKETKLSKKEQAVLAEFKAMDLLDMTPIQVMNELYRLQKKLK</sequence>
<proteinExistence type="inferred from homology"/>
<reference key="1">
    <citation type="journal article" date="2004" name="J. Mol. Microbiol. Biotechnol.">
        <title>The complete genome sequence of Bacillus licheniformis DSM13, an organism with great industrial potential.</title>
        <authorList>
            <person name="Veith B."/>
            <person name="Herzberg C."/>
            <person name="Steckel S."/>
            <person name="Feesche J."/>
            <person name="Maurer K.H."/>
            <person name="Ehrenreich P."/>
            <person name="Baeumer S."/>
            <person name="Henne A."/>
            <person name="Liesegang H."/>
            <person name="Merkl R."/>
            <person name="Ehrenreich A."/>
            <person name="Gottschalk G."/>
        </authorList>
    </citation>
    <scope>NUCLEOTIDE SEQUENCE [LARGE SCALE GENOMIC DNA]</scope>
    <source>
        <strain>ATCC 14580 / DSM 13 / JCM 2505 / CCUG 7422 / NBRC 12200 / NCIMB 9375 / NCTC 10341 / NRRL NRS-1264 / Gibson 46</strain>
    </source>
</reference>
<reference key="2">
    <citation type="journal article" date="2004" name="Genome Biol.">
        <title>Complete genome sequence of the industrial bacterium Bacillus licheniformis and comparisons with closely related Bacillus species.</title>
        <authorList>
            <person name="Rey M.W."/>
            <person name="Ramaiya P."/>
            <person name="Nelson B.A."/>
            <person name="Brody-Karpin S.D."/>
            <person name="Zaretsky E.J."/>
            <person name="Tang M."/>
            <person name="Lopez de Leon A."/>
            <person name="Xiang H."/>
            <person name="Gusti V."/>
            <person name="Clausen I.G."/>
            <person name="Olsen P.B."/>
            <person name="Rasmussen M.D."/>
            <person name="Andersen J.T."/>
            <person name="Joergensen P.L."/>
            <person name="Larsen T.S."/>
            <person name="Sorokin A."/>
            <person name="Bolotin A."/>
            <person name="Lapidus A."/>
            <person name="Galleron N."/>
            <person name="Ehrlich S.D."/>
            <person name="Berka R.M."/>
        </authorList>
    </citation>
    <scope>NUCLEOTIDE SEQUENCE [LARGE SCALE GENOMIC DNA]</scope>
    <source>
        <strain>ATCC 14580 / DSM 13 / JCM 2505 / CCUG 7422 / NBRC 12200 / NCIMB 9375 / NCTC 10341 / NRRL NRS-1264 / Gibson 46</strain>
    </source>
</reference>
<reference key="3">
    <citation type="submission" date="2007-04" db="EMBL/GenBank/DDBJ databases">
        <authorList>
            <person name="Berka R.M."/>
            <person name="Rey M.W."/>
            <person name="Ramaiya P."/>
        </authorList>
    </citation>
    <scope>SEQUENCE REVISION TO 534</scope>
</reference>
<feature type="chain" id="PRO_0000224347" description="DNA mismatch repair protein MutS">
    <location>
        <begin position="1"/>
        <end position="869"/>
    </location>
</feature>
<feature type="binding site" evidence="1">
    <location>
        <begin position="602"/>
        <end position="609"/>
    </location>
    <ligand>
        <name>ATP</name>
        <dbReference type="ChEBI" id="CHEBI:30616"/>
    </ligand>
</feature>
<dbReference type="EMBL" id="AE017333">
    <property type="protein sequence ID" value="AAU40822.1"/>
    <property type="molecule type" value="Genomic_DNA"/>
</dbReference>
<dbReference type="EMBL" id="CP000002">
    <property type="protein sequence ID" value="AAU23463.2"/>
    <property type="molecule type" value="Genomic_DNA"/>
</dbReference>
<dbReference type="RefSeq" id="WP_011197985.1">
    <property type="nucleotide sequence ID" value="NC_006322.1"/>
</dbReference>
<dbReference type="SMR" id="Q65JE2"/>
<dbReference type="STRING" id="279010.BL03663"/>
<dbReference type="GeneID" id="92861480"/>
<dbReference type="KEGG" id="bld:BLi01928"/>
<dbReference type="KEGG" id="bli:BL03663"/>
<dbReference type="eggNOG" id="COG0249">
    <property type="taxonomic scope" value="Bacteria"/>
</dbReference>
<dbReference type="HOGENOM" id="CLU_002472_3_1_9"/>
<dbReference type="Proteomes" id="UP000000606">
    <property type="component" value="Chromosome"/>
</dbReference>
<dbReference type="GO" id="GO:0005829">
    <property type="term" value="C:cytosol"/>
    <property type="evidence" value="ECO:0007669"/>
    <property type="project" value="TreeGrafter"/>
</dbReference>
<dbReference type="GO" id="GO:0005524">
    <property type="term" value="F:ATP binding"/>
    <property type="evidence" value="ECO:0007669"/>
    <property type="project" value="UniProtKB-UniRule"/>
</dbReference>
<dbReference type="GO" id="GO:0140664">
    <property type="term" value="F:ATP-dependent DNA damage sensor activity"/>
    <property type="evidence" value="ECO:0007669"/>
    <property type="project" value="InterPro"/>
</dbReference>
<dbReference type="GO" id="GO:0003684">
    <property type="term" value="F:damaged DNA binding"/>
    <property type="evidence" value="ECO:0007669"/>
    <property type="project" value="UniProtKB-UniRule"/>
</dbReference>
<dbReference type="GO" id="GO:0030983">
    <property type="term" value="F:mismatched DNA binding"/>
    <property type="evidence" value="ECO:0007669"/>
    <property type="project" value="InterPro"/>
</dbReference>
<dbReference type="GO" id="GO:0006298">
    <property type="term" value="P:mismatch repair"/>
    <property type="evidence" value="ECO:0007669"/>
    <property type="project" value="UniProtKB-UniRule"/>
</dbReference>
<dbReference type="CDD" id="cd03284">
    <property type="entry name" value="ABC_MutS1"/>
    <property type="match status" value="1"/>
</dbReference>
<dbReference type="FunFam" id="1.10.1420.10:FF:000007">
    <property type="entry name" value="DNA mismatch repair protein MutS"/>
    <property type="match status" value="1"/>
</dbReference>
<dbReference type="FunFam" id="3.40.1170.10:FF:000001">
    <property type="entry name" value="DNA mismatch repair protein MutS"/>
    <property type="match status" value="1"/>
</dbReference>
<dbReference type="FunFam" id="3.40.50.300:FF:000896">
    <property type="entry name" value="DNA mismatch repair protein MutS"/>
    <property type="match status" value="1"/>
</dbReference>
<dbReference type="Gene3D" id="1.10.1420.10">
    <property type="match status" value="2"/>
</dbReference>
<dbReference type="Gene3D" id="3.40.1170.10">
    <property type="entry name" value="DNA repair protein MutS, domain I"/>
    <property type="match status" value="1"/>
</dbReference>
<dbReference type="Gene3D" id="3.30.420.110">
    <property type="entry name" value="MutS, connector domain"/>
    <property type="match status" value="1"/>
</dbReference>
<dbReference type="Gene3D" id="3.40.50.300">
    <property type="entry name" value="P-loop containing nucleotide triphosphate hydrolases"/>
    <property type="match status" value="1"/>
</dbReference>
<dbReference type="HAMAP" id="MF_00096">
    <property type="entry name" value="MutS"/>
    <property type="match status" value="1"/>
</dbReference>
<dbReference type="InterPro" id="IPR005748">
    <property type="entry name" value="DNA_mismatch_repair_MutS"/>
</dbReference>
<dbReference type="InterPro" id="IPR007695">
    <property type="entry name" value="DNA_mismatch_repair_MutS-lik_N"/>
</dbReference>
<dbReference type="InterPro" id="IPR017261">
    <property type="entry name" value="DNA_mismatch_repair_MutS/MSH"/>
</dbReference>
<dbReference type="InterPro" id="IPR000432">
    <property type="entry name" value="DNA_mismatch_repair_MutS_C"/>
</dbReference>
<dbReference type="InterPro" id="IPR007861">
    <property type="entry name" value="DNA_mismatch_repair_MutS_clamp"/>
</dbReference>
<dbReference type="InterPro" id="IPR007696">
    <property type="entry name" value="DNA_mismatch_repair_MutS_core"/>
</dbReference>
<dbReference type="InterPro" id="IPR016151">
    <property type="entry name" value="DNA_mismatch_repair_MutS_N"/>
</dbReference>
<dbReference type="InterPro" id="IPR036187">
    <property type="entry name" value="DNA_mismatch_repair_MutS_sf"/>
</dbReference>
<dbReference type="InterPro" id="IPR007860">
    <property type="entry name" value="DNA_mmatch_repair_MutS_con_dom"/>
</dbReference>
<dbReference type="InterPro" id="IPR045076">
    <property type="entry name" value="MutS"/>
</dbReference>
<dbReference type="InterPro" id="IPR036678">
    <property type="entry name" value="MutS_con_dom_sf"/>
</dbReference>
<dbReference type="InterPro" id="IPR027417">
    <property type="entry name" value="P-loop_NTPase"/>
</dbReference>
<dbReference type="NCBIfam" id="TIGR01070">
    <property type="entry name" value="mutS1"/>
    <property type="match status" value="1"/>
</dbReference>
<dbReference type="NCBIfam" id="NF003810">
    <property type="entry name" value="PRK05399.1"/>
    <property type="match status" value="1"/>
</dbReference>
<dbReference type="PANTHER" id="PTHR11361:SF34">
    <property type="entry name" value="DNA MISMATCH REPAIR PROTEIN MSH1, MITOCHONDRIAL"/>
    <property type="match status" value="1"/>
</dbReference>
<dbReference type="PANTHER" id="PTHR11361">
    <property type="entry name" value="DNA MISMATCH REPAIR PROTEIN MUTS FAMILY MEMBER"/>
    <property type="match status" value="1"/>
</dbReference>
<dbReference type="Pfam" id="PF01624">
    <property type="entry name" value="MutS_I"/>
    <property type="match status" value="1"/>
</dbReference>
<dbReference type="Pfam" id="PF05188">
    <property type="entry name" value="MutS_II"/>
    <property type="match status" value="1"/>
</dbReference>
<dbReference type="Pfam" id="PF05192">
    <property type="entry name" value="MutS_III"/>
    <property type="match status" value="1"/>
</dbReference>
<dbReference type="Pfam" id="PF05190">
    <property type="entry name" value="MutS_IV"/>
    <property type="match status" value="1"/>
</dbReference>
<dbReference type="Pfam" id="PF00488">
    <property type="entry name" value="MutS_V"/>
    <property type="match status" value="1"/>
</dbReference>
<dbReference type="PIRSF" id="PIRSF037677">
    <property type="entry name" value="DNA_mis_repair_Msh6"/>
    <property type="match status" value="1"/>
</dbReference>
<dbReference type="SMART" id="SM00534">
    <property type="entry name" value="MUTSac"/>
    <property type="match status" value="1"/>
</dbReference>
<dbReference type="SMART" id="SM00533">
    <property type="entry name" value="MUTSd"/>
    <property type="match status" value="1"/>
</dbReference>
<dbReference type="SUPFAM" id="SSF55271">
    <property type="entry name" value="DNA repair protein MutS, domain I"/>
    <property type="match status" value="1"/>
</dbReference>
<dbReference type="SUPFAM" id="SSF53150">
    <property type="entry name" value="DNA repair protein MutS, domain II"/>
    <property type="match status" value="1"/>
</dbReference>
<dbReference type="SUPFAM" id="SSF48334">
    <property type="entry name" value="DNA repair protein MutS, domain III"/>
    <property type="match status" value="1"/>
</dbReference>
<dbReference type="SUPFAM" id="SSF52540">
    <property type="entry name" value="P-loop containing nucleoside triphosphate hydrolases"/>
    <property type="match status" value="1"/>
</dbReference>
<dbReference type="PROSITE" id="PS00486">
    <property type="entry name" value="DNA_MISMATCH_REPAIR_2"/>
    <property type="match status" value="1"/>
</dbReference>
<accession>Q65JE2</accession>
<accession>Q62UU6</accession>
<organism>
    <name type="scientific">Bacillus licheniformis (strain ATCC 14580 / DSM 13 / JCM 2505 / CCUG 7422 / NBRC 12200 / NCIMB 9375 / NCTC 10341 / NRRL NRS-1264 / Gibson 46)</name>
    <dbReference type="NCBI Taxonomy" id="279010"/>
    <lineage>
        <taxon>Bacteria</taxon>
        <taxon>Bacillati</taxon>
        <taxon>Bacillota</taxon>
        <taxon>Bacilli</taxon>
        <taxon>Bacillales</taxon>
        <taxon>Bacillaceae</taxon>
        <taxon>Bacillus</taxon>
    </lineage>
</organism>